<gene>
    <name evidence="1" type="primary">pepA</name>
    <name type="ordered locus">Nham_2339</name>
</gene>
<evidence type="ECO:0000255" key="1">
    <source>
        <dbReference type="HAMAP-Rule" id="MF_00181"/>
    </source>
</evidence>
<feature type="chain" id="PRO_1000019943" description="Probable cytosol aminopeptidase">
    <location>
        <begin position="1"/>
        <end position="500"/>
    </location>
</feature>
<feature type="active site" evidence="1">
    <location>
        <position position="276"/>
    </location>
</feature>
<feature type="active site" evidence="1">
    <location>
        <position position="350"/>
    </location>
</feature>
<feature type="binding site" evidence="1">
    <location>
        <position position="264"/>
    </location>
    <ligand>
        <name>Mn(2+)</name>
        <dbReference type="ChEBI" id="CHEBI:29035"/>
        <label>2</label>
    </ligand>
</feature>
<feature type="binding site" evidence="1">
    <location>
        <position position="269"/>
    </location>
    <ligand>
        <name>Mn(2+)</name>
        <dbReference type="ChEBI" id="CHEBI:29035"/>
        <label>1</label>
    </ligand>
</feature>
<feature type="binding site" evidence="1">
    <location>
        <position position="269"/>
    </location>
    <ligand>
        <name>Mn(2+)</name>
        <dbReference type="ChEBI" id="CHEBI:29035"/>
        <label>2</label>
    </ligand>
</feature>
<feature type="binding site" evidence="1">
    <location>
        <position position="287"/>
    </location>
    <ligand>
        <name>Mn(2+)</name>
        <dbReference type="ChEBI" id="CHEBI:29035"/>
        <label>2</label>
    </ligand>
</feature>
<feature type="binding site" evidence="1">
    <location>
        <position position="346"/>
    </location>
    <ligand>
        <name>Mn(2+)</name>
        <dbReference type="ChEBI" id="CHEBI:29035"/>
        <label>1</label>
    </ligand>
</feature>
<feature type="binding site" evidence="1">
    <location>
        <position position="348"/>
    </location>
    <ligand>
        <name>Mn(2+)</name>
        <dbReference type="ChEBI" id="CHEBI:29035"/>
        <label>1</label>
    </ligand>
</feature>
<feature type="binding site" evidence="1">
    <location>
        <position position="348"/>
    </location>
    <ligand>
        <name>Mn(2+)</name>
        <dbReference type="ChEBI" id="CHEBI:29035"/>
        <label>2</label>
    </ligand>
</feature>
<dbReference type="EC" id="3.4.11.1" evidence="1"/>
<dbReference type="EC" id="3.4.11.10" evidence="1"/>
<dbReference type="EMBL" id="CP000319">
    <property type="protein sequence ID" value="ABE63131.1"/>
    <property type="molecule type" value="Genomic_DNA"/>
</dbReference>
<dbReference type="RefSeq" id="WP_011510807.1">
    <property type="nucleotide sequence ID" value="NC_007964.1"/>
</dbReference>
<dbReference type="SMR" id="Q1QKW6"/>
<dbReference type="STRING" id="323097.Nham_2339"/>
<dbReference type="KEGG" id="nha:Nham_2339"/>
<dbReference type="eggNOG" id="COG0260">
    <property type="taxonomic scope" value="Bacteria"/>
</dbReference>
<dbReference type="HOGENOM" id="CLU_013734_6_0_5"/>
<dbReference type="OrthoDB" id="9809354at2"/>
<dbReference type="Proteomes" id="UP000001953">
    <property type="component" value="Chromosome"/>
</dbReference>
<dbReference type="GO" id="GO:0005737">
    <property type="term" value="C:cytoplasm"/>
    <property type="evidence" value="ECO:0007669"/>
    <property type="project" value="UniProtKB-SubCell"/>
</dbReference>
<dbReference type="GO" id="GO:0030145">
    <property type="term" value="F:manganese ion binding"/>
    <property type="evidence" value="ECO:0007669"/>
    <property type="project" value="UniProtKB-UniRule"/>
</dbReference>
<dbReference type="GO" id="GO:0070006">
    <property type="term" value="F:metalloaminopeptidase activity"/>
    <property type="evidence" value="ECO:0007669"/>
    <property type="project" value="InterPro"/>
</dbReference>
<dbReference type="GO" id="GO:0006508">
    <property type="term" value="P:proteolysis"/>
    <property type="evidence" value="ECO:0007669"/>
    <property type="project" value="UniProtKB-KW"/>
</dbReference>
<dbReference type="CDD" id="cd00433">
    <property type="entry name" value="Peptidase_M17"/>
    <property type="match status" value="1"/>
</dbReference>
<dbReference type="Gene3D" id="3.40.220.10">
    <property type="entry name" value="Leucine Aminopeptidase, subunit E, domain 1"/>
    <property type="match status" value="1"/>
</dbReference>
<dbReference type="Gene3D" id="3.40.630.10">
    <property type="entry name" value="Zn peptidases"/>
    <property type="match status" value="1"/>
</dbReference>
<dbReference type="HAMAP" id="MF_00181">
    <property type="entry name" value="Cytosol_peptidase_M17"/>
    <property type="match status" value="1"/>
</dbReference>
<dbReference type="InterPro" id="IPR011356">
    <property type="entry name" value="Leucine_aapep/pepB"/>
</dbReference>
<dbReference type="InterPro" id="IPR043472">
    <property type="entry name" value="Macro_dom-like"/>
</dbReference>
<dbReference type="InterPro" id="IPR000819">
    <property type="entry name" value="Peptidase_M17_C"/>
</dbReference>
<dbReference type="InterPro" id="IPR023042">
    <property type="entry name" value="Peptidase_M17_leu_NH2_pept"/>
</dbReference>
<dbReference type="InterPro" id="IPR008283">
    <property type="entry name" value="Peptidase_M17_N"/>
</dbReference>
<dbReference type="NCBIfam" id="NF002073">
    <property type="entry name" value="PRK00913.1-2"/>
    <property type="match status" value="1"/>
</dbReference>
<dbReference type="NCBIfam" id="NF002074">
    <property type="entry name" value="PRK00913.1-4"/>
    <property type="match status" value="1"/>
</dbReference>
<dbReference type="NCBIfam" id="NF002075">
    <property type="entry name" value="PRK00913.2-2"/>
    <property type="match status" value="1"/>
</dbReference>
<dbReference type="NCBIfam" id="NF002077">
    <property type="entry name" value="PRK00913.2-4"/>
    <property type="match status" value="1"/>
</dbReference>
<dbReference type="PANTHER" id="PTHR11963:SF23">
    <property type="entry name" value="CYTOSOL AMINOPEPTIDASE"/>
    <property type="match status" value="1"/>
</dbReference>
<dbReference type="PANTHER" id="PTHR11963">
    <property type="entry name" value="LEUCINE AMINOPEPTIDASE-RELATED"/>
    <property type="match status" value="1"/>
</dbReference>
<dbReference type="Pfam" id="PF00883">
    <property type="entry name" value="Peptidase_M17"/>
    <property type="match status" value="1"/>
</dbReference>
<dbReference type="Pfam" id="PF02789">
    <property type="entry name" value="Peptidase_M17_N"/>
    <property type="match status" value="1"/>
</dbReference>
<dbReference type="PRINTS" id="PR00481">
    <property type="entry name" value="LAMNOPPTDASE"/>
</dbReference>
<dbReference type="SUPFAM" id="SSF52949">
    <property type="entry name" value="Macro domain-like"/>
    <property type="match status" value="1"/>
</dbReference>
<dbReference type="SUPFAM" id="SSF53187">
    <property type="entry name" value="Zn-dependent exopeptidases"/>
    <property type="match status" value="1"/>
</dbReference>
<dbReference type="PROSITE" id="PS00631">
    <property type="entry name" value="CYTOSOL_AP"/>
    <property type="match status" value="1"/>
</dbReference>
<organism>
    <name type="scientific">Nitrobacter hamburgensis (strain DSM 10229 / NCIMB 13809 / X14)</name>
    <dbReference type="NCBI Taxonomy" id="323097"/>
    <lineage>
        <taxon>Bacteria</taxon>
        <taxon>Pseudomonadati</taxon>
        <taxon>Pseudomonadota</taxon>
        <taxon>Alphaproteobacteria</taxon>
        <taxon>Hyphomicrobiales</taxon>
        <taxon>Nitrobacteraceae</taxon>
        <taxon>Nitrobacter</taxon>
    </lineage>
</organism>
<comment type="function">
    <text evidence="1">Presumably involved in the processing and regular turnover of intracellular proteins. Catalyzes the removal of unsubstituted N-terminal amino acids from various peptides.</text>
</comment>
<comment type="catalytic activity">
    <reaction evidence="1">
        <text>Release of an N-terminal amino acid, Xaa-|-Yaa-, in which Xaa is preferably Leu, but may be other amino acids including Pro although not Arg or Lys, and Yaa may be Pro. Amino acid amides and methyl esters are also readily hydrolyzed, but rates on arylamides are exceedingly low.</text>
        <dbReference type="EC" id="3.4.11.1"/>
    </reaction>
</comment>
<comment type="catalytic activity">
    <reaction evidence="1">
        <text>Release of an N-terminal amino acid, preferentially leucine, but not glutamic or aspartic acids.</text>
        <dbReference type="EC" id="3.4.11.10"/>
    </reaction>
</comment>
<comment type="cofactor">
    <cofactor evidence="1">
        <name>Mn(2+)</name>
        <dbReference type="ChEBI" id="CHEBI:29035"/>
    </cofactor>
    <text evidence="1">Binds 2 manganese ions per subunit.</text>
</comment>
<comment type="subcellular location">
    <subcellularLocation>
        <location evidence="1">Cytoplasm</location>
    </subcellularLocation>
</comment>
<comment type="similarity">
    <text evidence="1">Belongs to the peptidase M17 family.</text>
</comment>
<protein>
    <recommendedName>
        <fullName evidence="1">Probable cytosol aminopeptidase</fullName>
        <ecNumber evidence="1">3.4.11.1</ecNumber>
    </recommendedName>
    <alternativeName>
        <fullName evidence="1">Leucine aminopeptidase</fullName>
        <shortName evidence="1">LAP</shortName>
        <ecNumber evidence="1">3.4.11.10</ecNumber>
    </alternativeName>
    <alternativeName>
        <fullName evidence="1">Leucyl aminopeptidase</fullName>
    </alternativeName>
</protein>
<reference key="1">
    <citation type="submission" date="2006-03" db="EMBL/GenBank/DDBJ databases">
        <title>Complete sequence of chromosome of Nitrobacter hamburgensis X14.</title>
        <authorList>
            <consortium name="US DOE Joint Genome Institute"/>
            <person name="Copeland A."/>
            <person name="Lucas S."/>
            <person name="Lapidus A."/>
            <person name="Barry K."/>
            <person name="Detter J.C."/>
            <person name="Glavina del Rio T."/>
            <person name="Hammon N."/>
            <person name="Israni S."/>
            <person name="Dalin E."/>
            <person name="Tice H."/>
            <person name="Pitluck S."/>
            <person name="Chain P."/>
            <person name="Malfatti S."/>
            <person name="Shin M."/>
            <person name="Vergez L."/>
            <person name="Schmutz J."/>
            <person name="Larimer F."/>
            <person name="Land M."/>
            <person name="Hauser L."/>
            <person name="Kyrpides N."/>
            <person name="Ivanova N."/>
            <person name="Ward B."/>
            <person name="Arp D."/>
            <person name="Klotz M."/>
            <person name="Stein L."/>
            <person name="O'Mullan G."/>
            <person name="Starkenburg S."/>
            <person name="Sayavedra L."/>
            <person name="Poret-Peterson A.T."/>
            <person name="Gentry M.E."/>
            <person name="Bruce D."/>
            <person name="Richardson P."/>
        </authorList>
    </citation>
    <scope>NUCLEOTIDE SEQUENCE [LARGE SCALE GENOMIC DNA]</scope>
    <source>
        <strain>DSM 10229 / NCIMB 13809 / X14</strain>
    </source>
</reference>
<proteinExistence type="inferred from homology"/>
<name>AMPA_NITHX</name>
<sequence length="500" mass="52765">MIDAVKVGFVPFSTAPRGTLVVFCDDALKFGRAASKALGASAGVVKRATTTNQFKGKSAATLDILAPEGLKADRLIVVGAGKASALKGSDFLKYGGVLAGKIRGDNGAVTVIAELPSAAMSPDQSASLASGIRLRAYKFDRYKTRKKDGDDTALHANVTIAVADVAAAKKAFAPDNHVVDGIIIARDLVNEPPNVLYPEEFARRASRLRRVGVGIDILDVKAMTKLGMGALLGVGQGSARPSRTVIMRWNGGKKGEPPVAFVGKGVCFDTGGISIKSAGGMEEMKGDMGGAACVVGLMHALAARKAKVNAVGAIGLVENMPDGNAQRPGDIVTSMSGQTIEIINTDAEGRLVLADVLWYVTRKFKPKVMVDLATLTGAIMVALGTEHAGLFSNNDQLSERLTKVGIETGERVWRMPLAPEYDKLIDSQFADMKNTGGRYGGSITAAQLLQRFVDDTPWAHLDIAGTAMGAPKSDINQSWGSGFGVRLLDRLVAEYYETKR</sequence>
<keyword id="KW-0031">Aminopeptidase</keyword>
<keyword id="KW-0963">Cytoplasm</keyword>
<keyword id="KW-0378">Hydrolase</keyword>
<keyword id="KW-0464">Manganese</keyword>
<keyword id="KW-0479">Metal-binding</keyword>
<keyword id="KW-0645">Protease</keyword>
<keyword id="KW-1185">Reference proteome</keyword>
<accession>Q1QKW6</accession>